<evidence type="ECO:0000255" key="1">
    <source>
        <dbReference type="HAMAP-Rule" id="MF_01161"/>
    </source>
</evidence>
<dbReference type="EC" id="6.3.4.19" evidence="1"/>
<dbReference type="EMBL" id="CP000023">
    <property type="protein sequence ID" value="AAV59740.1"/>
    <property type="molecule type" value="Genomic_DNA"/>
</dbReference>
<dbReference type="RefSeq" id="WP_011225242.1">
    <property type="nucleotide sequence ID" value="NC_006448.1"/>
</dbReference>
<dbReference type="SMR" id="Q5M6K9"/>
<dbReference type="STRING" id="264199.stu0010"/>
<dbReference type="KEGG" id="stl:stu0010"/>
<dbReference type="eggNOG" id="COG0037">
    <property type="taxonomic scope" value="Bacteria"/>
</dbReference>
<dbReference type="HOGENOM" id="CLU_018869_0_2_9"/>
<dbReference type="Proteomes" id="UP000001170">
    <property type="component" value="Chromosome"/>
</dbReference>
<dbReference type="GO" id="GO:0005737">
    <property type="term" value="C:cytoplasm"/>
    <property type="evidence" value="ECO:0007669"/>
    <property type="project" value="UniProtKB-SubCell"/>
</dbReference>
<dbReference type="GO" id="GO:0005524">
    <property type="term" value="F:ATP binding"/>
    <property type="evidence" value="ECO:0007669"/>
    <property type="project" value="UniProtKB-UniRule"/>
</dbReference>
<dbReference type="GO" id="GO:0032267">
    <property type="term" value="F:tRNA(Ile)-lysidine synthase activity"/>
    <property type="evidence" value="ECO:0007669"/>
    <property type="project" value="UniProtKB-EC"/>
</dbReference>
<dbReference type="GO" id="GO:0006400">
    <property type="term" value="P:tRNA modification"/>
    <property type="evidence" value="ECO:0007669"/>
    <property type="project" value="UniProtKB-UniRule"/>
</dbReference>
<dbReference type="CDD" id="cd01992">
    <property type="entry name" value="TilS_N"/>
    <property type="match status" value="1"/>
</dbReference>
<dbReference type="Gene3D" id="3.40.50.620">
    <property type="entry name" value="HUPs"/>
    <property type="match status" value="1"/>
</dbReference>
<dbReference type="HAMAP" id="MF_01161">
    <property type="entry name" value="tRNA_Ile_lys_synt"/>
    <property type="match status" value="1"/>
</dbReference>
<dbReference type="InterPro" id="IPR012796">
    <property type="entry name" value="Lysidine-tRNA-synth_C"/>
</dbReference>
<dbReference type="InterPro" id="IPR014729">
    <property type="entry name" value="Rossmann-like_a/b/a_fold"/>
</dbReference>
<dbReference type="InterPro" id="IPR011063">
    <property type="entry name" value="TilS/TtcA_N"/>
</dbReference>
<dbReference type="InterPro" id="IPR012094">
    <property type="entry name" value="tRNA_Ile_lys_synt"/>
</dbReference>
<dbReference type="InterPro" id="IPR012795">
    <property type="entry name" value="tRNA_Ile_lys_synt_N"/>
</dbReference>
<dbReference type="NCBIfam" id="TIGR02433">
    <property type="entry name" value="lysidine_TilS_C"/>
    <property type="match status" value="1"/>
</dbReference>
<dbReference type="NCBIfam" id="TIGR02432">
    <property type="entry name" value="lysidine_TilS_N"/>
    <property type="match status" value="1"/>
</dbReference>
<dbReference type="PANTHER" id="PTHR43033">
    <property type="entry name" value="TRNA(ILE)-LYSIDINE SYNTHASE-RELATED"/>
    <property type="match status" value="1"/>
</dbReference>
<dbReference type="PANTHER" id="PTHR43033:SF1">
    <property type="entry name" value="TRNA(ILE)-LYSIDINE SYNTHASE-RELATED"/>
    <property type="match status" value="1"/>
</dbReference>
<dbReference type="Pfam" id="PF01171">
    <property type="entry name" value="ATP_bind_3"/>
    <property type="match status" value="1"/>
</dbReference>
<dbReference type="SMART" id="SM00977">
    <property type="entry name" value="TilS_C"/>
    <property type="match status" value="1"/>
</dbReference>
<dbReference type="SUPFAM" id="SSF52402">
    <property type="entry name" value="Adenine nucleotide alpha hydrolases-like"/>
    <property type="match status" value="1"/>
</dbReference>
<dbReference type="SUPFAM" id="SSF56037">
    <property type="entry name" value="PheT/TilS domain"/>
    <property type="match status" value="1"/>
</dbReference>
<comment type="function">
    <text evidence="1">Ligates lysine onto the cytidine present at position 34 of the AUA codon-specific tRNA(Ile) that contains the anticodon CAU, in an ATP-dependent manner. Cytidine is converted to lysidine, thus changing the amino acid specificity of the tRNA from methionine to isoleucine.</text>
</comment>
<comment type="catalytic activity">
    <reaction evidence="1">
        <text>cytidine(34) in tRNA(Ile2) + L-lysine + ATP = lysidine(34) in tRNA(Ile2) + AMP + diphosphate + H(+)</text>
        <dbReference type="Rhea" id="RHEA:43744"/>
        <dbReference type="Rhea" id="RHEA-COMP:10625"/>
        <dbReference type="Rhea" id="RHEA-COMP:10670"/>
        <dbReference type="ChEBI" id="CHEBI:15378"/>
        <dbReference type="ChEBI" id="CHEBI:30616"/>
        <dbReference type="ChEBI" id="CHEBI:32551"/>
        <dbReference type="ChEBI" id="CHEBI:33019"/>
        <dbReference type="ChEBI" id="CHEBI:82748"/>
        <dbReference type="ChEBI" id="CHEBI:83665"/>
        <dbReference type="ChEBI" id="CHEBI:456215"/>
        <dbReference type="EC" id="6.3.4.19"/>
    </reaction>
</comment>
<comment type="subcellular location">
    <subcellularLocation>
        <location evidence="1">Cytoplasm</location>
    </subcellularLocation>
</comment>
<comment type="domain">
    <text>The N-terminal region contains the highly conserved SGGXDS motif, predicted to be a P-loop motif involved in ATP binding.</text>
</comment>
<comment type="similarity">
    <text evidence="1">Belongs to the tRNA(Ile)-lysidine synthase family.</text>
</comment>
<protein>
    <recommendedName>
        <fullName evidence="1">tRNA(Ile)-lysidine synthase</fullName>
        <ecNumber evidence="1">6.3.4.19</ecNumber>
    </recommendedName>
    <alternativeName>
        <fullName evidence="1">tRNA(Ile)-2-lysyl-cytidine synthase</fullName>
    </alternativeName>
    <alternativeName>
        <fullName evidence="1">tRNA(Ile)-lysidine synthetase</fullName>
    </alternativeName>
</protein>
<reference key="1">
    <citation type="journal article" date="2004" name="Nat. Biotechnol.">
        <title>Complete sequence and comparative genome analysis of the dairy bacterium Streptococcus thermophilus.</title>
        <authorList>
            <person name="Bolotin A."/>
            <person name="Quinquis B."/>
            <person name="Renault P."/>
            <person name="Sorokin A."/>
            <person name="Ehrlich S.D."/>
            <person name="Kulakauskas S."/>
            <person name="Lapidus A."/>
            <person name="Goltsman E."/>
            <person name="Mazur M."/>
            <person name="Pusch G.D."/>
            <person name="Fonstein M."/>
            <person name="Overbeek R."/>
            <person name="Kyprides N."/>
            <person name="Purnelle B."/>
            <person name="Prozzi D."/>
            <person name="Ngui K."/>
            <person name="Masuy D."/>
            <person name="Hancy F."/>
            <person name="Burteau S."/>
            <person name="Boutry M."/>
            <person name="Delcour J."/>
            <person name="Goffeau A."/>
            <person name="Hols P."/>
        </authorList>
    </citation>
    <scope>NUCLEOTIDE SEQUENCE [LARGE SCALE GENOMIC DNA]</scope>
    <source>
        <strain>ATCC BAA-250 / LMG 18311</strain>
    </source>
</reference>
<organism>
    <name type="scientific">Streptococcus thermophilus (strain ATCC BAA-250 / LMG 18311)</name>
    <dbReference type="NCBI Taxonomy" id="264199"/>
    <lineage>
        <taxon>Bacteria</taxon>
        <taxon>Bacillati</taxon>
        <taxon>Bacillota</taxon>
        <taxon>Bacilli</taxon>
        <taxon>Lactobacillales</taxon>
        <taxon>Streptococcaceae</taxon>
        <taxon>Streptococcus</taxon>
    </lineage>
</organism>
<name>TILS_STRT2</name>
<sequence>MTEKLLQMMQEKGYFNQHKKVLVAVSGGADSMSLLHFLYNHQKDLDIQLGIAHVNHKQRQESEYEENYLRHWAKEHKVPFHYSAFSGKFSENAARTFRYDFFKRIMKEADYSALVTAHHADDQAETIFMRLLRGSRLRHLSGICDVRSFGTGQIIRPFLHIPKDQLPVTFHFEDRSNSSLAYLRNRIRLTYLPTLSQENPKFKEHLCLLADEIALMDKALEELTKDITITDLSVFQQQTDAVQHLLIQSYLESFPDLQLSKGQFNQLMSFLRKKTSGKMPLKNGYVLVKTQTDFLITKEEPISLSSPSLLEFGKSIVFEEYLLTFSEPHVVSNVDTINIWSDAPIVIRHRHEGDRIDLGTHHKKIRRLFIDNKISEKDRQKAIIGEQDGQIIFLYVAGRLYLKKRPKNAILYGTVVIYKKF</sequence>
<feature type="chain" id="PRO_0000181785" description="tRNA(Ile)-lysidine synthase">
    <location>
        <begin position="1"/>
        <end position="421"/>
    </location>
</feature>
<feature type="binding site" evidence="1">
    <location>
        <begin position="26"/>
        <end position="31"/>
    </location>
    <ligand>
        <name>ATP</name>
        <dbReference type="ChEBI" id="CHEBI:30616"/>
    </ligand>
</feature>
<proteinExistence type="inferred from homology"/>
<accession>Q5M6K9</accession>
<keyword id="KW-0067">ATP-binding</keyword>
<keyword id="KW-0963">Cytoplasm</keyword>
<keyword id="KW-0436">Ligase</keyword>
<keyword id="KW-0547">Nucleotide-binding</keyword>
<keyword id="KW-1185">Reference proteome</keyword>
<keyword id="KW-0819">tRNA processing</keyword>
<gene>
    <name evidence="1" type="primary">tilS</name>
    <name type="ordered locus">stu0010</name>
</gene>